<keyword id="KW-0963">Cytoplasm</keyword>
<keyword id="KW-0275">Fatty acid biosynthesis</keyword>
<keyword id="KW-0276">Fatty acid metabolism</keyword>
<keyword id="KW-0444">Lipid biosynthesis</keyword>
<keyword id="KW-0443">Lipid metabolism</keyword>
<keyword id="KW-0460">Magnesium</keyword>
<keyword id="KW-0479">Metal-binding</keyword>
<keyword id="KW-0808">Transferase</keyword>
<dbReference type="EC" id="2.7.8.7" evidence="1"/>
<dbReference type="EMBL" id="CP001139">
    <property type="protein sequence ID" value="ACH65780.1"/>
    <property type="molecule type" value="Genomic_DNA"/>
</dbReference>
<dbReference type="RefSeq" id="WP_012533282.1">
    <property type="nucleotide sequence ID" value="NC_011184.1"/>
</dbReference>
<dbReference type="SMR" id="B5FAG6"/>
<dbReference type="KEGG" id="vfm:VFMJ11_2188"/>
<dbReference type="HOGENOM" id="CLU_089696_3_1_6"/>
<dbReference type="Proteomes" id="UP000001857">
    <property type="component" value="Chromosome I"/>
</dbReference>
<dbReference type="GO" id="GO:0005737">
    <property type="term" value="C:cytoplasm"/>
    <property type="evidence" value="ECO:0007669"/>
    <property type="project" value="UniProtKB-SubCell"/>
</dbReference>
<dbReference type="GO" id="GO:0008897">
    <property type="term" value="F:holo-[acyl-carrier-protein] synthase activity"/>
    <property type="evidence" value="ECO:0007669"/>
    <property type="project" value="UniProtKB-UniRule"/>
</dbReference>
<dbReference type="GO" id="GO:0000287">
    <property type="term" value="F:magnesium ion binding"/>
    <property type="evidence" value="ECO:0007669"/>
    <property type="project" value="UniProtKB-UniRule"/>
</dbReference>
<dbReference type="GO" id="GO:0006633">
    <property type="term" value="P:fatty acid biosynthetic process"/>
    <property type="evidence" value="ECO:0007669"/>
    <property type="project" value="UniProtKB-UniRule"/>
</dbReference>
<dbReference type="FunFam" id="3.90.470.20:FF:000001">
    <property type="entry name" value="Holo-[acyl-carrier-protein] synthase"/>
    <property type="match status" value="1"/>
</dbReference>
<dbReference type="Gene3D" id="3.90.470.20">
    <property type="entry name" value="4'-phosphopantetheinyl transferase domain"/>
    <property type="match status" value="1"/>
</dbReference>
<dbReference type="HAMAP" id="MF_00101">
    <property type="entry name" value="AcpS"/>
    <property type="match status" value="1"/>
</dbReference>
<dbReference type="InterPro" id="IPR008278">
    <property type="entry name" value="4-PPantetheinyl_Trfase_dom"/>
</dbReference>
<dbReference type="InterPro" id="IPR037143">
    <property type="entry name" value="4-PPantetheinyl_Trfase_dom_sf"/>
</dbReference>
<dbReference type="InterPro" id="IPR002582">
    <property type="entry name" value="ACPS"/>
</dbReference>
<dbReference type="InterPro" id="IPR004568">
    <property type="entry name" value="Ppantetheine-prot_Trfase_dom"/>
</dbReference>
<dbReference type="NCBIfam" id="TIGR00516">
    <property type="entry name" value="acpS"/>
    <property type="match status" value="1"/>
</dbReference>
<dbReference type="NCBIfam" id="TIGR00556">
    <property type="entry name" value="pantethn_trn"/>
    <property type="match status" value="1"/>
</dbReference>
<dbReference type="Pfam" id="PF01648">
    <property type="entry name" value="ACPS"/>
    <property type="match status" value="1"/>
</dbReference>
<dbReference type="SUPFAM" id="SSF56214">
    <property type="entry name" value="4'-phosphopantetheinyl transferase"/>
    <property type="match status" value="1"/>
</dbReference>
<gene>
    <name evidence="1" type="primary">acpS</name>
    <name type="ordered locus">VFMJ11_2188</name>
</gene>
<evidence type="ECO:0000255" key="1">
    <source>
        <dbReference type="HAMAP-Rule" id="MF_00101"/>
    </source>
</evidence>
<accession>B5FAG6</accession>
<organism>
    <name type="scientific">Aliivibrio fischeri (strain MJ11)</name>
    <name type="common">Vibrio fischeri</name>
    <dbReference type="NCBI Taxonomy" id="388396"/>
    <lineage>
        <taxon>Bacteria</taxon>
        <taxon>Pseudomonadati</taxon>
        <taxon>Pseudomonadota</taxon>
        <taxon>Gammaproteobacteria</taxon>
        <taxon>Vibrionales</taxon>
        <taxon>Vibrionaceae</taxon>
        <taxon>Aliivibrio</taxon>
    </lineage>
</organism>
<proteinExistence type="inferred from homology"/>
<sequence length="126" mass="13792">MAIVGLGTDIAEIERVEKALSRSGDAFAERILSQSEFEIYQELKQKGRFLAKRFAAKEAASKALGTGIAHGVTFHDFTISNDENGKPMLTLSGKALELSQKSHIANIHLTISDERHYAVATVIFES</sequence>
<name>ACPS_ALIFM</name>
<comment type="function">
    <text evidence="1">Transfers the 4'-phosphopantetheine moiety from coenzyme A to a Ser of acyl-carrier-protein.</text>
</comment>
<comment type="catalytic activity">
    <reaction evidence="1">
        <text>apo-[ACP] + CoA = holo-[ACP] + adenosine 3',5'-bisphosphate + H(+)</text>
        <dbReference type="Rhea" id="RHEA:12068"/>
        <dbReference type="Rhea" id="RHEA-COMP:9685"/>
        <dbReference type="Rhea" id="RHEA-COMP:9690"/>
        <dbReference type="ChEBI" id="CHEBI:15378"/>
        <dbReference type="ChEBI" id="CHEBI:29999"/>
        <dbReference type="ChEBI" id="CHEBI:57287"/>
        <dbReference type="ChEBI" id="CHEBI:58343"/>
        <dbReference type="ChEBI" id="CHEBI:64479"/>
        <dbReference type="EC" id="2.7.8.7"/>
    </reaction>
</comment>
<comment type="cofactor">
    <cofactor evidence="1">
        <name>Mg(2+)</name>
        <dbReference type="ChEBI" id="CHEBI:18420"/>
    </cofactor>
</comment>
<comment type="subcellular location">
    <subcellularLocation>
        <location evidence="1">Cytoplasm</location>
    </subcellularLocation>
</comment>
<comment type="similarity">
    <text evidence="1">Belongs to the P-Pant transferase superfamily. AcpS family.</text>
</comment>
<feature type="chain" id="PRO_1000093928" description="Holo-[acyl-carrier-protein] synthase">
    <location>
        <begin position="1"/>
        <end position="126"/>
    </location>
</feature>
<feature type="binding site" evidence="1">
    <location>
        <position position="9"/>
    </location>
    <ligand>
        <name>Mg(2+)</name>
        <dbReference type="ChEBI" id="CHEBI:18420"/>
    </ligand>
</feature>
<feature type="binding site" evidence="1">
    <location>
        <position position="58"/>
    </location>
    <ligand>
        <name>Mg(2+)</name>
        <dbReference type="ChEBI" id="CHEBI:18420"/>
    </ligand>
</feature>
<protein>
    <recommendedName>
        <fullName evidence="1">Holo-[acyl-carrier-protein] synthase</fullName>
        <shortName evidence="1">Holo-ACP synthase</shortName>
        <ecNumber evidence="1">2.7.8.7</ecNumber>
    </recommendedName>
    <alternativeName>
        <fullName evidence="1">4'-phosphopantetheinyl transferase AcpS</fullName>
    </alternativeName>
</protein>
<reference key="1">
    <citation type="submission" date="2008-08" db="EMBL/GenBank/DDBJ databases">
        <title>Complete sequence of Vibrio fischeri strain MJ11.</title>
        <authorList>
            <person name="Mandel M.J."/>
            <person name="Stabb E.V."/>
            <person name="Ruby E.G."/>
            <person name="Ferriera S."/>
            <person name="Johnson J."/>
            <person name="Kravitz S."/>
            <person name="Beeson K."/>
            <person name="Sutton G."/>
            <person name="Rogers Y.-H."/>
            <person name="Friedman R."/>
            <person name="Frazier M."/>
            <person name="Venter J.C."/>
        </authorList>
    </citation>
    <scope>NUCLEOTIDE SEQUENCE [LARGE SCALE GENOMIC DNA]</scope>
    <source>
        <strain>MJ11</strain>
    </source>
</reference>